<comment type="similarity">
    <text evidence="1">Belongs to the UPF0482 family.</text>
</comment>
<name>YNFB_SALTI</name>
<sequence length="113" mass="12846">MNNTLSKRLCLTAMLTLAAVVYTTSAFAETSKLVIESGDSAQSRQEAAMEKEQWNDTRSLRQKVNTRAEKEWDKADAAFDNRDKCEQSANINAYWEPNTLRCLDRRTGRVITP</sequence>
<keyword id="KW-0732">Signal</keyword>
<proteinExistence type="inferred from homology"/>
<gene>
    <name evidence="1" type="primary">ynfB</name>
    <name type="ordered locus">STY1560</name>
    <name type="ordered locus">t1424</name>
</gene>
<accession>Q8XEU2</accession>
<accession>Q7AMY9</accession>
<reference key="1">
    <citation type="journal article" date="2001" name="Nature">
        <title>Complete genome sequence of a multiple drug resistant Salmonella enterica serovar Typhi CT18.</title>
        <authorList>
            <person name="Parkhill J."/>
            <person name="Dougan G."/>
            <person name="James K.D."/>
            <person name="Thomson N.R."/>
            <person name="Pickard D."/>
            <person name="Wain J."/>
            <person name="Churcher C.M."/>
            <person name="Mungall K.L."/>
            <person name="Bentley S.D."/>
            <person name="Holden M.T.G."/>
            <person name="Sebaihia M."/>
            <person name="Baker S."/>
            <person name="Basham D."/>
            <person name="Brooks K."/>
            <person name="Chillingworth T."/>
            <person name="Connerton P."/>
            <person name="Cronin A."/>
            <person name="Davis P."/>
            <person name="Davies R.M."/>
            <person name="Dowd L."/>
            <person name="White N."/>
            <person name="Farrar J."/>
            <person name="Feltwell T."/>
            <person name="Hamlin N."/>
            <person name="Haque A."/>
            <person name="Hien T.T."/>
            <person name="Holroyd S."/>
            <person name="Jagels K."/>
            <person name="Krogh A."/>
            <person name="Larsen T.S."/>
            <person name="Leather S."/>
            <person name="Moule S."/>
            <person name="O'Gaora P."/>
            <person name="Parry C."/>
            <person name="Quail M.A."/>
            <person name="Rutherford K.M."/>
            <person name="Simmonds M."/>
            <person name="Skelton J."/>
            <person name="Stevens K."/>
            <person name="Whitehead S."/>
            <person name="Barrell B.G."/>
        </authorList>
    </citation>
    <scope>NUCLEOTIDE SEQUENCE [LARGE SCALE GENOMIC DNA]</scope>
    <source>
        <strain>CT18</strain>
    </source>
</reference>
<reference key="2">
    <citation type="journal article" date="2003" name="J. Bacteriol.">
        <title>Comparative genomics of Salmonella enterica serovar Typhi strains Ty2 and CT18.</title>
        <authorList>
            <person name="Deng W."/>
            <person name="Liou S.-R."/>
            <person name="Plunkett G. III"/>
            <person name="Mayhew G.F."/>
            <person name="Rose D.J."/>
            <person name="Burland V."/>
            <person name="Kodoyianni V."/>
            <person name="Schwartz D.C."/>
            <person name="Blattner F.R."/>
        </authorList>
    </citation>
    <scope>NUCLEOTIDE SEQUENCE [LARGE SCALE GENOMIC DNA]</scope>
    <source>
        <strain>ATCC 700931 / Ty2</strain>
    </source>
</reference>
<organism>
    <name type="scientific">Salmonella typhi</name>
    <dbReference type="NCBI Taxonomy" id="90370"/>
    <lineage>
        <taxon>Bacteria</taxon>
        <taxon>Pseudomonadati</taxon>
        <taxon>Pseudomonadota</taxon>
        <taxon>Gammaproteobacteria</taxon>
        <taxon>Enterobacterales</taxon>
        <taxon>Enterobacteriaceae</taxon>
        <taxon>Salmonella</taxon>
    </lineage>
</organism>
<evidence type="ECO:0000255" key="1">
    <source>
        <dbReference type="HAMAP-Rule" id="MF_01581"/>
    </source>
</evidence>
<feature type="signal peptide" evidence="1">
    <location>
        <begin position="1"/>
        <end position="28"/>
    </location>
</feature>
<feature type="chain" id="PRO_0000300228" description="UPF0482 protein YnfB">
    <location>
        <begin position="29"/>
        <end position="113"/>
    </location>
</feature>
<dbReference type="EMBL" id="AL513382">
    <property type="protein sequence ID" value="CAD01810.1"/>
    <property type="molecule type" value="Genomic_DNA"/>
</dbReference>
<dbReference type="EMBL" id="AE014613">
    <property type="protein sequence ID" value="AAO69067.1"/>
    <property type="molecule type" value="Genomic_DNA"/>
</dbReference>
<dbReference type="RefSeq" id="NP_455977.1">
    <property type="nucleotide sequence ID" value="NC_003198.1"/>
</dbReference>
<dbReference type="RefSeq" id="WP_001066440.1">
    <property type="nucleotide sequence ID" value="NZ_WSUR01000006.1"/>
</dbReference>
<dbReference type="STRING" id="220341.gene:17585500"/>
<dbReference type="KEGG" id="stt:t1424"/>
<dbReference type="KEGG" id="sty:STY1560"/>
<dbReference type="PATRIC" id="fig|220341.7.peg.1569"/>
<dbReference type="eggNOG" id="ENOG5032SRB">
    <property type="taxonomic scope" value="Bacteria"/>
</dbReference>
<dbReference type="HOGENOM" id="CLU_167574_0_0_6"/>
<dbReference type="OMA" id="EPNTERC"/>
<dbReference type="OrthoDB" id="6455281at2"/>
<dbReference type="Proteomes" id="UP000000541">
    <property type="component" value="Chromosome"/>
</dbReference>
<dbReference type="Proteomes" id="UP000002670">
    <property type="component" value="Chromosome"/>
</dbReference>
<dbReference type="HAMAP" id="MF_01581">
    <property type="entry name" value="UPF0482"/>
    <property type="match status" value="1"/>
</dbReference>
<dbReference type="InterPro" id="IPR009700">
    <property type="entry name" value="DUF1283"/>
</dbReference>
<dbReference type="NCBIfam" id="NF010180">
    <property type="entry name" value="PRK13659.1"/>
    <property type="match status" value="1"/>
</dbReference>
<dbReference type="Pfam" id="PF06932">
    <property type="entry name" value="DUF1283"/>
    <property type="match status" value="1"/>
</dbReference>
<protein>
    <recommendedName>
        <fullName evidence="1">UPF0482 protein YnfB</fullName>
    </recommendedName>
</protein>